<comment type="function">
    <text evidence="1">Cell wall formation.</text>
</comment>
<comment type="catalytic activity">
    <reaction evidence="1">
        <text>UDP-N-acetyl-alpha-D-muramate + NADP(+) = UDP-N-acetyl-3-O-(1-carboxyvinyl)-alpha-D-glucosamine + NADPH + H(+)</text>
        <dbReference type="Rhea" id="RHEA:12248"/>
        <dbReference type="ChEBI" id="CHEBI:15378"/>
        <dbReference type="ChEBI" id="CHEBI:57783"/>
        <dbReference type="ChEBI" id="CHEBI:58349"/>
        <dbReference type="ChEBI" id="CHEBI:68483"/>
        <dbReference type="ChEBI" id="CHEBI:70757"/>
        <dbReference type="EC" id="1.3.1.98"/>
    </reaction>
</comment>
<comment type="cofactor">
    <cofactor evidence="1">
        <name>FAD</name>
        <dbReference type="ChEBI" id="CHEBI:57692"/>
    </cofactor>
</comment>
<comment type="pathway">
    <text evidence="1">Cell wall biogenesis; peptidoglycan biosynthesis.</text>
</comment>
<comment type="subcellular location">
    <subcellularLocation>
        <location evidence="1">Cytoplasm</location>
    </subcellularLocation>
</comment>
<organism>
    <name type="scientific">Dechloromonas aromatica (strain RCB)</name>
    <dbReference type="NCBI Taxonomy" id="159087"/>
    <lineage>
        <taxon>Bacteria</taxon>
        <taxon>Pseudomonadati</taxon>
        <taxon>Pseudomonadota</taxon>
        <taxon>Betaproteobacteria</taxon>
        <taxon>Rhodocyclales</taxon>
        <taxon>Azonexaceae</taxon>
        <taxon>Dechloromonas</taxon>
    </lineage>
</organism>
<dbReference type="EC" id="1.3.1.98" evidence="1"/>
<dbReference type="EMBL" id="CP000089">
    <property type="protein sequence ID" value="AAZ44803.1"/>
    <property type="molecule type" value="Genomic_DNA"/>
</dbReference>
<dbReference type="SMR" id="Q47K28"/>
<dbReference type="STRING" id="159087.Daro_0044"/>
<dbReference type="KEGG" id="dar:Daro_0044"/>
<dbReference type="eggNOG" id="COG0812">
    <property type="taxonomic scope" value="Bacteria"/>
</dbReference>
<dbReference type="HOGENOM" id="CLU_035304_0_0_4"/>
<dbReference type="OrthoDB" id="9804753at2"/>
<dbReference type="UniPathway" id="UPA00219"/>
<dbReference type="GO" id="GO:0005829">
    <property type="term" value="C:cytosol"/>
    <property type="evidence" value="ECO:0007669"/>
    <property type="project" value="TreeGrafter"/>
</dbReference>
<dbReference type="GO" id="GO:0071949">
    <property type="term" value="F:FAD binding"/>
    <property type="evidence" value="ECO:0007669"/>
    <property type="project" value="InterPro"/>
</dbReference>
<dbReference type="GO" id="GO:0008762">
    <property type="term" value="F:UDP-N-acetylmuramate dehydrogenase activity"/>
    <property type="evidence" value="ECO:0007669"/>
    <property type="project" value="UniProtKB-UniRule"/>
</dbReference>
<dbReference type="GO" id="GO:0051301">
    <property type="term" value="P:cell division"/>
    <property type="evidence" value="ECO:0007669"/>
    <property type="project" value="UniProtKB-KW"/>
</dbReference>
<dbReference type="GO" id="GO:0071555">
    <property type="term" value="P:cell wall organization"/>
    <property type="evidence" value="ECO:0007669"/>
    <property type="project" value="UniProtKB-KW"/>
</dbReference>
<dbReference type="GO" id="GO:0009252">
    <property type="term" value="P:peptidoglycan biosynthetic process"/>
    <property type="evidence" value="ECO:0007669"/>
    <property type="project" value="UniProtKB-UniRule"/>
</dbReference>
<dbReference type="GO" id="GO:0008360">
    <property type="term" value="P:regulation of cell shape"/>
    <property type="evidence" value="ECO:0007669"/>
    <property type="project" value="UniProtKB-KW"/>
</dbReference>
<dbReference type="Gene3D" id="3.30.465.10">
    <property type="match status" value="1"/>
</dbReference>
<dbReference type="Gene3D" id="3.90.78.10">
    <property type="entry name" value="UDP-N-acetylenolpyruvoylglucosamine reductase, C-terminal domain"/>
    <property type="match status" value="1"/>
</dbReference>
<dbReference type="Gene3D" id="3.30.43.10">
    <property type="entry name" value="Uridine Diphospho-n-acetylenolpyruvylglucosamine Reductase, domain 2"/>
    <property type="match status" value="1"/>
</dbReference>
<dbReference type="HAMAP" id="MF_00037">
    <property type="entry name" value="MurB"/>
    <property type="match status" value="1"/>
</dbReference>
<dbReference type="InterPro" id="IPR016166">
    <property type="entry name" value="FAD-bd_PCMH"/>
</dbReference>
<dbReference type="InterPro" id="IPR036318">
    <property type="entry name" value="FAD-bd_PCMH-like_sf"/>
</dbReference>
<dbReference type="InterPro" id="IPR016167">
    <property type="entry name" value="FAD-bd_PCMH_sub1"/>
</dbReference>
<dbReference type="InterPro" id="IPR016169">
    <property type="entry name" value="FAD-bd_PCMH_sub2"/>
</dbReference>
<dbReference type="InterPro" id="IPR003170">
    <property type="entry name" value="MurB"/>
</dbReference>
<dbReference type="InterPro" id="IPR011601">
    <property type="entry name" value="MurB_C"/>
</dbReference>
<dbReference type="InterPro" id="IPR036635">
    <property type="entry name" value="MurB_C_sf"/>
</dbReference>
<dbReference type="InterPro" id="IPR006094">
    <property type="entry name" value="Oxid_FAD_bind_N"/>
</dbReference>
<dbReference type="NCBIfam" id="TIGR00179">
    <property type="entry name" value="murB"/>
    <property type="match status" value="1"/>
</dbReference>
<dbReference type="NCBIfam" id="NF000755">
    <property type="entry name" value="PRK00046.1"/>
    <property type="match status" value="1"/>
</dbReference>
<dbReference type="NCBIfam" id="NF010478">
    <property type="entry name" value="PRK13903.1"/>
    <property type="match status" value="1"/>
</dbReference>
<dbReference type="PANTHER" id="PTHR21071">
    <property type="entry name" value="UDP-N-ACETYLENOLPYRUVOYLGLUCOSAMINE REDUCTASE"/>
    <property type="match status" value="1"/>
</dbReference>
<dbReference type="PANTHER" id="PTHR21071:SF4">
    <property type="entry name" value="UDP-N-ACETYLENOLPYRUVOYLGLUCOSAMINE REDUCTASE"/>
    <property type="match status" value="1"/>
</dbReference>
<dbReference type="Pfam" id="PF01565">
    <property type="entry name" value="FAD_binding_4"/>
    <property type="match status" value="1"/>
</dbReference>
<dbReference type="Pfam" id="PF02873">
    <property type="entry name" value="MurB_C"/>
    <property type="match status" value="1"/>
</dbReference>
<dbReference type="SUPFAM" id="SSF56176">
    <property type="entry name" value="FAD-binding/transporter-associated domain-like"/>
    <property type="match status" value="1"/>
</dbReference>
<dbReference type="SUPFAM" id="SSF56194">
    <property type="entry name" value="Uridine diphospho-N-Acetylenolpyruvylglucosamine reductase, MurB, C-terminal domain"/>
    <property type="match status" value="1"/>
</dbReference>
<dbReference type="PROSITE" id="PS51387">
    <property type="entry name" value="FAD_PCMH"/>
    <property type="match status" value="1"/>
</dbReference>
<gene>
    <name evidence="1" type="primary">murB</name>
    <name type="ordered locus">Daro_0044</name>
</gene>
<sequence length="337" mass="36759">MNPSTNVDLTPFNTLALPGRAARYQKVTAPEALTAPELVKEKRFILGGGSNLVLTGDFDGLLLHMAIPGKRLVKEDAEAWFIEAGAGENWHDFVQWTLTRGWPGLENLSLIPGTVGAAPIQNIGAYGLEVADCLHSVTGWDFEKKALLTIDRDDCRFAYRDSLFKQQGWHLNGRIAITSVIFRLAKAWQPNMRYADIAQELATRKIAAPSAQDIATAVIAVRQRKLPDPAVTPNAGSFFHNPVVEAIQAEALADAYPTLPRYPQPDGRVKLAAGWLIEQAGWKGKALGPVGMYEKQALVLVNRGGATGQDVQRTMAAVQAAVREKFAVELTPEPIFL</sequence>
<proteinExistence type="inferred from homology"/>
<reference key="1">
    <citation type="journal article" date="2009" name="BMC Genomics">
        <title>Metabolic analysis of the soil microbe Dechloromonas aromatica str. RCB: indications of a surprisingly complex life-style and cryptic anaerobic pathways for aromatic degradation.</title>
        <authorList>
            <person name="Salinero K.K."/>
            <person name="Keller K."/>
            <person name="Feil W.S."/>
            <person name="Feil H."/>
            <person name="Trong S."/>
            <person name="Di Bartolo G."/>
            <person name="Lapidus A."/>
        </authorList>
    </citation>
    <scope>NUCLEOTIDE SEQUENCE [LARGE SCALE GENOMIC DNA]</scope>
    <source>
        <strain>RCB</strain>
    </source>
</reference>
<evidence type="ECO:0000255" key="1">
    <source>
        <dbReference type="HAMAP-Rule" id="MF_00037"/>
    </source>
</evidence>
<feature type="chain" id="PRO_0000224679" description="UDP-N-acetylenolpyruvoylglucosamine reductase">
    <location>
        <begin position="1"/>
        <end position="337"/>
    </location>
</feature>
<feature type="domain" description="FAD-binding PCMH-type" evidence="1">
    <location>
        <begin position="16"/>
        <end position="187"/>
    </location>
</feature>
<feature type="active site" evidence="1">
    <location>
        <position position="160"/>
    </location>
</feature>
<feature type="active site" description="Proton donor" evidence="1">
    <location>
        <position position="237"/>
    </location>
</feature>
<feature type="active site" evidence="1">
    <location>
        <position position="333"/>
    </location>
</feature>
<protein>
    <recommendedName>
        <fullName evidence="1">UDP-N-acetylenolpyruvoylglucosamine reductase</fullName>
        <ecNumber evidence="1">1.3.1.98</ecNumber>
    </recommendedName>
    <alternativeName>
        <fullName evidence="1">UDP-N-acetylmuramate dehydrogenase</fullName>
    </alternativeName>
</protein>
<keyword id="KW-0131">Cell cycle</keyword>
<keyword id="KW-0132">Cell division</keyword>
<keyword id="KW-0133">Cell shape</keyword>
<keyword id="KW-0961">Cell wall biogenesis/degradation</keyword>
<keyword id="KW-0963">Cytoplasm</keyword>
<keyword id="KW-0274">FAD</keyword>
<keyword id="KW-0285">Flavoprotein</keyword>
<keyword id="KW-0521">NADP</keyword>
<keyword id="KW-0560">Oxidoreductase</keyword>
<keyword id="KW-0573">Peptidoglycan synthesis</keyword>
<accession>Q47K28</accession>
<name>MURB_DECAR</name>